<feature type="signal peptide" evidence="1">
    <location>
        <begin position="1" status="less than"/>
        <end position="10"/>
    </location>
</feature>
<feature type="propeptide" id="PRO_0000450295" evidence="1">
    <location>
        <begin position="11"/>
        <end position="35"/>
    </location>
</feature>
<feature type="peptide" id="PRO_0000450296" description="Temporin-SHa" evidence="2">
    <location>
        <begin position="36"/>
        <end position="48"/>
    </location>
</feature>
<feature type="modified residue" description="Phenylalanine amide" evidence="2">
    <location>
        <position position="48"/>
    </location>
</feature>
<feature type="mutagenesis site" description="Increase in antimicrobial specificity. Small increase in potency against Gram-positive bacteria, moderate increase in potency against Gram-negative bacteria and fungi, small increase in antiviral activity, small increase in anti-leishmania activity but no change in anti-trypanosoma activity, small decrease of hemolytic activity and no change in induction of bacterial resistance." evidence="5 6">
    <original>S</original>
    <variation>K</variation>
    <location>
        <position position="38"/>
    </location>
</feature>
<feature type="non-terminal residue" evidence="13">
    <location>
        <position position="1"/>
    </location>
</feature>
<proteinExistence type="evidence at protein level"/>
<organism>
    <name type="scientific">Pelophylax saharicus</name>
    <name type="common">Sahara frog</name>
    <name type="synonym">Rana saharica</name>
    <dbReference type="NCBI Taxonomy" id="70019"/>
    <lineage>
        <taxon>Eukaryota</taxon>
        <taxon>Metazoa</taxon>
        <taxon>Chordata</taxon>
        <taxon>Craniata</taxon>
        <taxon>Vertebrata</taxon>
        <taxon>Euteleostomi</taxon>
        <taxon>Amphibia</taxon>
        <taxon>Batrachia</taxon>
        <taxon>Anura</taxon>
        <taxon>Neobatrachia</taxon>
        <taxon>Ranoidea</taxon>
        <taxon>Ranidae</taxon>
        <taxon>Pelophylax</taxon>
    </lineage>
</organism>
<comment type="function">
    <text evidence="2 3 4 5 6">Amphipathic alpha-helical antimicrobial peptide with highly potent activity against Gram-positive bacteria, and potent activity Gram-negative bacteria and fungi (MIC=2-30 uM) (PubMed:18584916, PubMed:18795798, PubMed:28319176). Acts through membranolytic mechanism involving rapid membrane permeabilization and depolarization (PubMed:18795798, PubMed:28319176). Shows a direct extra-cellular antiviral activity probably through degradation of the viral envelope (PubMed:30669255). Also shows a weak indirect antiviral activity by inhibiting virus replication (PubMed:30669255). Also displays anti-trypanosoma and anti-leishmania (prosmastigotes and axenic amastigotes) activity through membranolytic mechanism (PubMed:18584916, PubMed:25668079). Also induces apoptosis in leishmania promastigotes at high peptide concentrations (PubMed:28319176). Shows moderate hemolytic activity (LC(50)=25 uM) (PubMed:18584916, PubMed:18795798). In contrast to many antibiotics, this peptide does not induce bacterial resistance (PubMed:28319176).</text>
</comment>
<comment type="subcellular location">
    <subcellularLocation>
        <location evidence="2">Secreted</location>
    </subcellularLocation>
    <subcellularLocation>
        <location evidence="3">Target cell membrane</location>
    </subcellularLocation>
    <text evidence="11">May insert into the lipid bilayer with an in-plane (parallel) orientation.</text>
</comment>
<comment type="tissue specificity">
    <text evidence="10">Expressed by the skin glands.</text>
</comment>
<comment type="mass spectrometry" mass="1379.8" method="MALDI" evidence="2"/>
<comment type="biotechnology">
    <text evidence="12">Attractive candidate as antimicrobial coating agent. When this peptide is covalently grafted to a surface, the adhering bacteria are most probably permeabilized (killed or at least damaged), thus unable to grow.</text>
</comment>
<comment type="similarity">
    <text evidence="9">Belongs to the frog skin active peptide (FSAP) family. Temporin subfamily.</text>
</comment>
<name>TPA_PELSA</name>
<dbReference type="EMBL" id="AM748899">
    <property type="protein sequence ID" value="CAO77282.1"/>
    <property type="molecule type" value="mRNA"/>
</dbReference>
<dbReference type="GO" id="GO:0005576">
    <property type="term" value="C:extracellular region"/>
    <property type="evidence" value="ECO:0007669"/>
    <property type="project" value="UniProtKB-SubCell"/>
</dbReference>
<dbReference type="GO" id="GO:0016020">
    <property type="term" value="C:membrane"/>
    <property type="evidence" value="ECO:0007669"/>
    <property type="project" value="UniProtKB-KW"/>
</dbReference>
<dbReference type="GO" id="GO:0044218">
    <property type="term" value="C:other organism cell membrane"/>
    <property type="evidence" value="ECO:0007669"/>
    <property type="project" value="UniProtKB-KW"/>
</dbReference>
<dbReference type="GO" id="GO:0042742">
    <property type="term" value="P:defense response to bacterium"/>
    <property type="evidence" value="ECO:0007669"/>
    <property type="project" value="UniProtKB-KW"/>
</dbReference>
<dbReference type="GO" id="GO:0050832">
    <property type="term" value="P:defense response to fungus"/>
    <property type="evidence" value="ECO:0007669"/>
    <property type="project" value="UniProtKB-KW"/>
</dbReference>
<dbReference type="GO" id="GO:0045087">
    <property type="term" value="P:innate immune response"/>
    <property type="evidence" value="ECO:0007669"/>
    <property type="project" value="UniProtKB-KW"/>
</dbReference>
<dbReference type="GO" id="GO:0031640">
    <property type="term" value="P:killing of cells of another organism"/>
    <property type="evidence" value="ECO:0007669"/>
    <property type="project" value="UniProtKB-KW"/>
</dbReference>
<dbReference type="InterPro" id="IPR004275">
    <property type="entry name" value="Frog_antimicrobial_propeptide"/>
</dbReference>
<dbReference type="Pfam" id="PF03032">
    <property type="entry name" value="FSAP_sig_propep"/>
    <property type="match status" value="1"/>
</dbReference>
<reference key="1">
    <citation type="journal article" date="2008" name="Peptides">
        <title>Isolation, characterization and molecular cloning of new temporins from the skin of the North African ranid Pelophylax saharica.</title>
        <authorList>
            <person name="Abbassi F."/>
            <person name="Oury B."/>
            <person name="Blasco T."/>
            <person name="Sereno D."/>
            <person name="Bolbach G."/>
            <person name="Nicolas P."/>
            <person name="Hani K."/>
            <person name="Amiche M."/>
            <person name="Ladram A."/>
        </authorList>
    </citation>
    <scope>NUCLEOTIDE SEQUENCE [MRNA]</scope>
    <scope>PROTEIN SEQUENCE OF 36-48</scope>
    <scope>FUNCTION</scope>
    <scope>MASS SPECTROMETRY</scope>
    <scope>AMIDATION AT PHE-48</scope>
    <scope>SUBCELLULAR LOCATION</scope>
    <scope>SYNTHESIS OF 36-48</scope>
    <source>
        <tissue>Skin</tissue>
    </source>
</reference>
<reference key="2">
    <citation type="journal article" date="2014" name="J. Pept. Sci.">
        <title>Temporin-SHa peptides grafted on gold surfaces display antibacterial activity.</title>
        <authorList>
            <person name="Lombana A."/>
            <person name="Raja Z."/>
            <person name="Casale S."/>
            <person name="Pradier C.M."/>
            <person name="Foulon T."/>
            <person name="Ladram A."/>
            <person name="Humblot V."/>
        </authorList>
    </citation>
    <scope>BIOTECHNOLOGY</scope>
</reference>
<reference key="3">
    <citation type="journal article" date="2015" name="Molecules">
        <title>The role of phosphoglycans in the susceptibility of Leishmania mexicana to the temporin family of anti-microbial peptides.</title>
        <authorList>
            <person name="Eggimann G.A."/>
            <person name="Sweeney K."/>
            <person name="Bolt H.L."/>
            <person name="Rozatian N."/>
            <person name="Cobb S.L."/>
            <person name="Denny P.W."/>
        </authorList>
    </citation>
    <scope>FUNCTION</scope>
</reference>
<reference key="4">
    <citation type="journal article" date="2017" name="PLoS ONE">
        <title>Insight into the mechanism of action of temporin-SHa, a new broad-spectrum antiparasitic and antibacterial agent.</title>
        <authorList>
            <person name="Raja Z."/>
            <person name="Andre S."/>
            <person name="Abbassi F."/>
            <person name="Humblot V."/>
            <person name="Lequin O."/>
            <person name="Bouceba T."/>
            <person name="Correia I."/>
            <person name="Casale S."/>
            <person name="Foulon T."/>
            <person name="Sereno D."/>
            <person name="Oury B."/>
            <person name="Ladram A."/>
        </authorList>
    </citation>
    <scope>FUNCTION</scope>
    <scope>MUTAGENESIS OF SER-38</scope>
</reference>
<reference key="5">
    <citation type="journal article" date="2019" name="Viruses">
        <title>Comparison of anti-viral activity of frog skin anti-microbial peptides temporin-SHa and [K3]SHa to LL-37 and Temporin-Tb against herpes simplex virus type 1.</title>
        <authorList>
            <person name="Roy M."/>
            <person name="Lebeau L."/>
            <person name="Chessa C."/>
            <person name="Damour A."/>
            <person name="Ladram A."/>
            <person name="Oury B."/>
            <person name="Boutolleau D."/>
            <person name="Bodet C."/>
            <person name="Leveque N."/>
        </authorList>
    </citation>
    <scope>FUNCTION AS ANTIVIRAL PEPTIDE</scope>
    <scope>MUTAGENESIS OF SER-38</scope>
</reference>
<reference key="6">
    <citation type="journal article" date="2008" name="Biochemistry">
        <title>Solution structure and model membrane interactions of temporins-SH, antimicrobial peptides from amphibian skin. A NMR spectroscopy and differential scanning calorimetry study.</title>
        <authorList>
            <person name="Abbassi F."/>
            <person name="Galanth C."/>
            <person name="Amiche M."/>
            <person name="Saito K."/>
            <person name="Piesse C."/>
            <person name="Zargarian L."/>
            <person name="Hani K."/>
            <person name="Nicolas P."/>
            <person name="Lequin O."/>
            <person name="Ladram A."/>
        </authorList>
    </citation>
    <scope>STRUCTURE BY NMR OF 36-48 IN SDS MICELLES</scope>
    <scope>FUNCTION</scope>
    <scope>SYNTHESIS OF 36-48</scope>
</reference>
<keyword id="KW-0027">Amidation</keyword>
<keyword id="KW-0878">Amphibian defense peptide</keyword>
<keyword id="KW-0044">Antibiotic</keyword>
<keyword id="KW-0929">Antimicrobial</keyword>
<keyword id="KW-0165">Cleavage on pair of basic residues</keyword>
<keyword id="KW-0204">Cytolysis</keyword>
<keyword id="KW-0903">Direct protein sequencing</keyword>
<keyword id="KW-0295">Fungicide</keyword>
<keyword id="KW-0354">Hemolysis</keyword>
<keyword id="KW-0391">Immunity</keyword>
<keyword id="KW-0399">Innate immunity</keyword>
<keyword id="KW-0472">Membrane</keyword>
<keyword id="KW-0964">Secreted</keyword>
<keyword id="KW-0732">Signal</keyword>
<keyword id="KW-1052">Target cell membrane</keyword>
<keyword id="KW-1053">Target membrane</keyword>
<accession>B3KYH4</accession>
<evidence type="ECO:0000250" key="1">
    <source>
        <dbReference type="UniProtKB" id="P79874"/>
    </source>
</evidence>
<evidence type="ECO:0000269" key="2">
    <source>
    </source>
</evidence>
<evidence type="ECO:0000269" key="3">
    <source>
    </source>
</evidence>
<evidence type="ECO:0000269" key="4">
    <source>
    </source>
</evidence>
<evidence type="ECO:0000269" key="5">
    <source>
    </source>
</evidence>
<evidence type="ECO:0000269" key="6">
    <source>
    </source>
</evidence>
<evidence type="ECO:0000303" key="7">
    <source>
    </source>
</evidence>
<evidence type="ECO:0000303" key="8">
    <source>
    </source>
</evidence>
<evidence type="ECO:0000305" key="9"/>
<evidence type="ECO:0000305" key="10">
    <source>
    </source>
</evidence>
<evidence type="ECO:0000305" key="11">
    <source>
    </source>
</evidence>
<evidence type="ECO:0000305" key="12">
    <source>
    </source>
</evidence>
<evidence type="ECO:0000312" key="13">
    <source>
        <dbReference type="EMBL" id="CAO77282.1"/>
    </source>
</evidence>
<sequence length="50" mass="5699">FLGTINLSLCEQERDADEEERRDEPNESNVEVEKRFLSGIVGMLGKLFGK</sequence>
<protein>
    <recommendedName>
        <fullName evidence="8">Temporin-SHa</fullName>
    </recommendedName>
    <alternativeName>
        <fullName evidence="7">Temporin-1Sa</fullName>
        <shortName evidence="7">Temp-1Sa</shortName>
    </alternativeName>
</protein>